<evidence type="ECO:0000255" key="1">
    <source>
        <dbReference type="HAMAP-Rule" id="MF_01849"/>
    </source>
</evidence>
<evidence type="ECO:0000255" key="2">
    <source>
        <dbReference type="PROSITE-ProRule" id="PRU01266"/>
    </source>
</evidence>
<reference key="1">
    <citation type="journal article" date="2007" name="Nat. Biotechnol.">
        <title>Complete genome sequence of the fish pathogen Flavobacterium psychrophilum.</title>
        <authorList>
            <person name="Duchaud E."/>
            <person name="Boussaha M."/>
            <person name="Loux V."/>
            <person name="Bernardet J.-F."/>
            <person name="Michel C."/>
            <person name="Kerouault B."/>
            <person name="Mondot S."/>
            <person name="Nicolas P."/>
            <person name="Bossy R."/>
            <person name="Caron C."/>
            <person name="Bessieres P."/>
            <person name="Gibrat J.-F."/>
            <person name="Claverol S."/>
            <person name="Dumetz F."/>
            <person name="Le Henaff M."/>
            <person name="Benmansour A."/>
        </authorList>
    </citation>
    <scope>NUCLEOTIDE SEQUENCE [LARGE SCALE GENOMIC DNA]</scope>
    <source>
        <strain>ATCC 49511 / DSM 21280 / CIP 103535 / JIP02/86</strain>
    </source>
</reference>
<dbReference type="EC" id="2.1.1.192" evidence="1"/>
<dbReference type="EMBL" id="AM398681">
    <property type="protein sequence ID" value="CAL44142.1"/>
    <property type="molecule type" value="Genomic_DNA"/>
</dbReference>
<dbReference type="RefSeq" id="WP_011964179.1">
    <property type="nucleotide sequence ID" value="NC_009613.3"/>
</dbReference>
<dbReference type="RefSeq" id="YP_001296944.1">
    <property type="nucleotide sequence ID" value="NC_009613.3"/>
</dbReference>
<dbReference type="SMR" id="A6H1B8"/>
<dbReference type="STRING" id="402612.FP2080"/>
<dbReference type="EnsemblBacteria" id="CAL44142">
    <property type="protein sequence ID" value="CAL44142"/>
    <property type="gene ID" value="FP2080"/>
</dbReference>
<dbReference type="GeneID" id="66551736"/>
<dbReference type="KEGG" id="fps:FP2080"/>
<dbReference type="PATRIC" id="fig|402612.5.peg.2107"/>
<dbReference type="eggNOG" id="COG0820">
    <property type="taxonomic scope" value="Bacteria"/>
</dbReference>
<dbReference type="HOGENOM" id="CLU_029101_2_0_10"/>
<dbReference type="OrthoDB" id="9793973at2"/>
<dbReference type="Proteomes" id="UP000006394">
    <property type="component" value="Chromosome"/>
</dbReference>
<dbReference type="GO" id="GO:0005737">
    <property type="term" value="C:cytoplasm"/>
    <property type="evidence" value="ECO:0007669"/>
    <property type="project" value="UniProtKB-SubCell"/>
</dbReference>
<dbReference type="GO" id="GO:0051539">
    <property type="term" value="F:4 iron, 4 sulfur cluster binding"/>
    <property type="evidence" value="ECO:0007669"/>
    <property type="project" value="UniProtKB-UniRule"/>
</dbReference>
<dbReference type="GO" id="GO:0046872">
    <property type="term" value="F:metal ion binding"/>
    <property type="evidence" value="ECO:0007669"/>
    <property type="project" value="UniProtKB-KW"/>
</dbReference>
<dbReference type="GO" id="GO:0070040">
    <property type="term" value="F:rRNA (adenine(2503)-C2-)-methyltransferase activity"/>
    <property type="evidence" value="ECO:0007669"/>
    <property type="project" value="UniProtKB-UniRule"/>
</dbReference>
<dbReference type="GO" id="GO:0019843">
    <property type="term" value="F:rRNA binding"/>
    <property type="evidence" value="ECO:0007669"/>
    <property type="project" value="UniProtKB-UniRule"/>
</dbReference>
<dbReference type="GO" id="GO:0002935">
    <property type="term" value="F:tRNA (adenine(37)-C2)-methyltransferase activity"/>
    <property type="evidence" value="ECO:0007669"/>
    <property type="project" value="UniProtKB-UniRule"/>
</dbReference>
<dbReference type="GO" id="GO:0000049">
    <property type="term" value="F:tRNA binding"/>
    <property type="evidence" value="ECO:0007669"/>
    <property type="project" value="UniProtKB-UniRule"/>
</dbReference>
<dbReference type="GO" id="GO:0070475">
    <property type="term" value="P:rRNA base methylation"/>
    <property type="evidence" value="ECO:0007669"/>
    <property type="project" value="UniProtKB-UniRule"/>
</dbReference>
<dbReference type="GO" id="GO:0030488">
    <property type="term" value="P:tRNA methylation"/>
    <property type="evidence" value="ECO:0007669"/>
    <property type="project" value="UniProtKB-UniRule"/>
</dbReference>
<dbReference type="CDD" id="cd01335">
    <property type="entry name" value="Radical_SAM"/>
    <property type="match status" value="1"/>
</dbReference>
<dbReference type="FunFam" id="3.20.20.70:FF:000014">
    <property type="entry name" value="Probable dual-specificity RNA methyltransferase RlmN"/>
    <property type="match status" value="1"/>
</dbReference>
<dbReference type="Gene3D" id="1.10.150.530">
    <property type="match status" value="1"/>
</dbReference>
<dbReference type="Gene3D" id="3.20.20.70">
    <property type="entry name" value="Aldolase class I"/>
    <property type="match status" value="1"/>
</dbReference>
<dbReference type="HAMAP" id="MF_01849">
    <property type="entry name" value="RNA_methyltr_RlmN"/>
    <property type="match status" value="1"/>
</dbReference>
<dbReference type="InterPro" id="IPR013785">
    <property type="entry name" value="Aldolase_TIM"/>
</dbReference>
<dbReference type="InterPro" id="IPR040072">
    <property type="entry name" value="Methyltransferase_A"/>
</dbReference>
<dbReference type="InterPro" id="IPR048641">
    <property type="entry name" value="RlmN_N"/>
</dbReference>
<dbReference type="InterPro" id="IPR027492">
    <property type="entry name" value="RNA_MTrfase_RlmN"/>
</dbReference>
<dbReference type="InterPro" id="IPR004383">
    <property type="entry name" value="rRNA_lsu_MTrfase_RlmN/Cfr"/>
</dbReference>
<dbReference type="InterPro" id="IPR007197">
    <property type="entry name" value="rSAM"/>
</dbReference>
<dbReference type="NCBIfam" id="TIGR00048">
    <property type="entry name" value="rRNA_mod_RlmN"/>
    <property type="match status" value="1"/>
</dbReference>
<dbReference type="PANTHER" id="PTHR30544">
    <property type="entry name" value="23S RRNA METHYLTRANSFERASE"/>
    <property type="match status" value="1"/>
</dbReference>
<dbReference type="PANTHER" id="PTHR30544:SF5">
    <property type="entry name" value="RADICAL SAM CORE DOMAIN-CONTAINING PROTEIN"/>
    <property type="match status" value="1"/>
</dbReference>
<dbReference type="Pfam" id="PF04055">
    <property type="entry name" value="Radical_SAM"/>
    <property type="match status" value="1"/>
</dbReference>
<dbReference type="Pfam" id="PF21016">
    <property type="entry name" value="RlmN_N"/>
    <property type="match status" value="1"/>
</dbReference>
<dbReference type="PIRSF" id="PIRSF006004">
    <property type="entry name" value="CHP00048"/>
    <property type="match status" value="1"/>
</dbReference>
<dbReference type="SFLD" id="SFLDF00275">
    <property type="entry name" value="adenosine_C2_methyltransferase"/>
    <property type="match status" value="1"/>
</dbReference>
<dbReference type="SFLD" id="SFLDG01062">
    <property type="entry name" value="methyltransferase_(Class_A)"/>
    <property type="match status" value="1"/>
</dbReference>
<dbReference type="SUPFAM" id="SSF102114">
    <property type="entry name" value="Radical SAM enzymes"/>
    <property type="match status" value="1"/>
</dbReference>
<dbReference type="PROSITE" id="PS51918">
    <property type="entry name" value="RADICAL_SAM"/>
    <property type="match status" value="1"/>
</dbReference>
<protein>
    <recommendedName>
        <fullName evidence="1">Probable dual-specificity RNA methyltransferase RlmN</fullName>
        <ecNumber evidence="1">2.1.1.192</ecNumber>
    </recommendedName>
    <alternativeName>
        <fullName evidence="1">23S rRNA (adenine(2503)-C(2))-methyltransferase</fullName>
    </alternativeName>
    <alternativeName>
        <fullName evidence="1">23S rRNA m2A2503 methyltransferase</fullName>
    </alternativeName>
    <alternativeName>
        <fullName evidence="1">Ribosomal RNA large subunit methyltransferase N</fullName>
    </alternativeName>
    <alternativeName>
        <fullName evidence="1">tRNA (adenine(37)-C(2))-methyltransferase</fullName>
    </alternativeName>
    <alternativeName>
        <fullName evidence="1">tRNA m2A37 methyltransferase</fullName>
    </alternativeName>
</protein>
<organism>
    <name type="scientific">Flavobacterium psychrophilum (strain ATCC 49511 / DSM 21280 / CIP 103535 / JIP02/86)</name>
    <dbReference type="NCBI Taxonomy" id="402612"/>
    <lineage>
        <taxon>Bacteria</taxon>
        <taxon>Pseudomonadati</taxon>
        <taxon>Bacteroidota</taxon>
        <taxon>Flavobacteriia</taxon>
        <taxon>Flavobacteriales</taxon>
        <taxon>Flavobacteriaceae</taxon>
        <taxon>Flavobacterium</taxon>
    </lineage>
</organism>
<sequence length="347" mass="39359">MQIEKKDIRALSKDQLRDFFVINKDKAFRGNQVYEWLWSKGAHSFEDMTNVSKGTRQMLVENFVINHIKVDTMQRSSDGTVKNAVRLHDGLIVESVLIPTETRTTACVSSQVGCSLDCNFCATARLKRMRNLEPGEIYDQVLAIDRESKLYFNRPLSNIVFMGMGEPLMNYNNVIKAIDMITSSEGLGMSPKRITVSTSGVSKMIKKMADDEVKFKLAVSLHSAVEEIRNKIMPFTKSFPLPELREALQYWYHKTKSKITYEYVVWKGINDNKESVDALVKFCKHVPCKVNLIEYNPIDDGEFQQASPESINAYIKALEANGIIAKVRHSRGKDIDAACGQLANKEI</sequence>
<proteinExistence type="inferred from homology"/>
<accession>A6H1B8</accession>
<comment type="function">
    <text evidence="1">Specifically methylates position 2 of adenine 2503 in 23S rRNA and position 2 of adenine 37 in tRNAs.</text>
</comment>
<comment type="catalytic activity">
    <reaction evidence="1">
        <text>adenosine(2503) in 23S rRNA + 2 reduced [2Fe-2S]-[ferredoxin] + 2 S-adenosyl-L-methionine = 2-methyladenosine(2503) in 23S rRNA + 5'-deoxyadenosine + L-methionine + 2 oxidized [2Fe-2S]-[ferredoxin] + S-adenosyl-L-homocysteine</text>
        <dbReference type="Rhea" id="RHEA:42916"/>
        <dbReference type="Rhea" id="RHEA-COMP:10000"/>
        <dbReference type="Rhea" id="RHEA-COMP:10001"/>
        <dbReference type="Rhea" id="RHEA-COMP:10152"/>
        <dbReference type="Rhea" id="RHEA-COMP:10282"/>
        <dbReference type="ChEBI" id="CHEBI:17319"/>
        <dbReference type="ChEBI" id="CHEBI:33737"/>
        <dbReference type="ChEBI" id="CHEBI:33738"/>
        <dbReference type="ChEBI" id="CHEBI:57844"/>
        <dbReference type="ChEBI" id="CHEBI:57856"/>
        <dbReference type="ChEBI" id="CHEBI:59789"/>
        <dbReference type="ChEBI" id="CHEBI:74411"/>
        <dbReference type="ChEBI" id="CHEBI:74497"/>
        <dbReference type="EC" id="2.1.1.192"/>
    </reaction>
</comment>
<comment type="catalytic activity">
    <reaction evidence="1">
        <text>adenosine(37) in tRNA + 2 reduced [2Fe-2S]-[ferredoxin] + 2 S-adenosyl-L-methionine = 2-methyladenosine(37) in tRNA + 5'-deoxyadenosine + L-methionine + 2 oxidized [2Fe-2S]-[ferredoxin] + S-adenosyl-L-homocysteine</text>
        <dbReference type="Rhea" id="RHEA:43332"/>
        <dbReference type="Rhea" id="RHEA-COMP:10000"/>
        <dbReference type="Rhea" id="RHEA-COMP:10001"/>
        <dbReference type="Rhea" id="RHEA-COMP:10162"/>
        <dbReference type="Rhea" id="RHEA-COMP:10485"/>
        <dbReference type="ChEBI" id="CHEBI:17319"/>
        <dbReference type="ChEBI" id="CHEBI:33737"/>
        <dbReference type="ChEBI" id="CHEBI:33738"/>
        <dbReference type="ChEBI" id="CHEBI:57844"/>
        <dbReference type="ChEBI" id="CHEBI:57856"/>
        <dbReference type="ChEBI" id="CHEBI:59789"/>
        <dbReference type="ChEBI" id="CHEBI:74411"/>
        <dbReference type="ChEBI" id="CHEBI:74497"/>
        <dbReference type="EC" id="2.1.1.192"/>
    </reaction>
</comment>
<comment type="cofactor">
    <cofactor evidence="1">
        <name>[4Fe-4S] cluster</name>
        <dbReference type="ChEBI" id="CHEBI:49883"/>
    </cofactor>
    <text evidence="1">Binds 1 [4Fe-4S] cluster. The cluster is coordinated with 3 cysteines and an exchangeable S-adenosyl-L-methionine.</text>
</comment>
<comment type="subcellular location">
    <subcellularLocation>
        <location evidence="1">Cytoplasm</location>
    </subcellularLocation>
</comment>
<comment type="miscellaneous">
    <text evidence="1">Reaction proceeds by a ping-pong mechanism involving intermediate methylation of a conserved cysteine residue.</text>
</comment>
<comment type="similarity">
    <text evidence="1">Belongs to the radical SAM superfamily. RlmN family.</text>
</comment>
<gene>
    <name evidence="1" type="primary">rlmN</name>
    <name type="ordered locus">FP2080</name>
</gene>
<keyword id="KW-0004">4Fe-4S</keyword>
<keyword id="KW-0963">Cytoplasm</keyword>
<keyword id="KW-1015">Disulfide bond</keyword>
<keyword id="KW-0408">Iron</keyword>
<keyword id="KW-0411">Iron-sulfur</keyword>
<keyword id="KW-0479">Metal-binding</keyword>
<keyword id="KW-0489">Methyltransferase</keyword>
<keyword id="KW-1185">Reference proteome</keyword>
<keyword id="KW-0698">rRNA processing</keyword>
<keyword id="KW-0949">S-adenosyl-L-methionine</keyword>
<keyword id="KW-0808">Transferase</keyword>
<keyword id="KW-0819">tRNA processing</keyword>
<name>RLMN_FLAPJ</name>
<feature type="chain" id="PRO_0000350178" description="Probable dual-specificity RNA methyltransferase RlmN">
    <location>
        <begin position="1"/>
        <end position="347"/>
    </location>
</feature>
<feature type="domain" description="Radical SAM core" evidence="2">
    <location>
        <begin position="100"/>
        <end position="334"/>
    </location>
</feature>
<feature type="active site" description="Proton acceptor" evidence="1">
    <location>
        <position position="94"/>
    </location>
</feature>
<feature type="active site" description="S-methylcysteine intermediate" evidence="1">
    <location>
        <position position="339"/>
    </location>
</feature>
<feature type="binding site" evidence="1">
    <location>
        <position position="114"/>
    </location>
    <ligand>
        <name>[4Fe-4S] cluster</name>
        <dbReference type="ChEBI" id="CHEBI:49883"/>
        <note>4Fe-4S-S-AdoMet</note>
    </ligand>
</feature>
<feature type="binding site" evidence="1">
    <location>
        <position position="118"/>
    </location>
    <ligand>
        <name>[4Fe-4S] cluster</name>
        <dbReference type="ChEBI" id="CHEBI:49883"/>
        <note>4Fe-4S-S-AdoMet</note>
    </ligand>
</feature>
<feature type="binding site" evidence="1">
    <location>
        <position position="121"/>
    </location>
    <ligand>
        <name>[4Fe-4S] cluster</name>
        <dbReference type="ChEBI" id="CHEBI:49883"/>
        <note>4Fe-4S-S-AdoMet</note>
    </ligand>
</feature>
<feature type="binding site" evidence="1">
    <location>
        <begin position="165"/>
        <end position="166"/>
    </location>
    <ligand>
        <name>S-adenosyl-L-methionine</name>
        <dbReference type="ChEBI" id="CHEBI:59789"/>
    </ligand>
</feature>
<feature type="binding site" evidence="1">
    <location>
        <position position="197"/>
    </location>
    <ligand>
        <name>S-adenosyl-L-methionine</name>
        <dbReference type="ChEBI" id="CHEBI:59789"/>
    </ligand>
</feature>
<feature type="binding site" evidence="1">
    <location>
        <begin position="220"/>
        <end position="222"/>
    </location>
    <ligand>
        <name>S-adenosyl-L-methionine</name>
        <dbReference type="ChEBI" id="CHEBI:59789"/>
    </ligand>
</feature>
<feature type="binding site" evidence="1">
    <location>
        <position position="296"/>
    </location>
    <ligand>
        <name>S-adenosyl-L-methionine</name>
        <dbReference type="ChEBI" id="CHEBI:59789"/>
    </ligand>
</feature>
<feature type="disulfide bond" description="(transient)" evidence="1">
    <location>
        <begin position="107"/>
        <end position="339"/>
    </location>
</feature>